<feature type="chain" id="PRO_0000447710" description="Glutamine-rich protein 2">
    <location>
        <begin position="1"/>
        <end position="592"/>
    </location>
</feature>
<feature type="region of interest" description="Disordered" evidence="2">
    <location>
        <begin position="488"/>
        <end position="592"/>
    </location>
</feature>
<feature type="compositionally biased region" description="Polar residues" evidence="2">
    <location>
        <begin position="544"/>
        <end position="567"/>
    </location>
</feature>
<feature type="sequence variant" evidence="3">
    <location>
        <begin position="471"/>
        <end position="479"/>
    </location>
</feature>
<keyword id="KW-0966">Cell projection</keyword>
<keyword id="KW-0969">Cilium</keyword>
<keyword id="KW-0963">Cytoplasm</keyword>
<keyword id="KW-0282">Flagellum</keyword>
<keyword id="KW-0472">Membrane</keyword>
<keyword id="KW-0539">Nucleus</keyword>
<keyword id="KW-1185">Reference proteome</keyword>
<keyword id="KW-0677">Repeat</keyword>
<sequence length="592" mass="66541">MENSVSEASLYLQDQLDKLRTIIESMLGSSSTLLSMSITPHKSTACLVPGQIDPEATCPACSLDVSHQVSLLVQRYEQLQDMVSGLAASRPSKKAKLQGQDEELLGHVQSAILQVQGDCEKLNITTSNLIEDHRQKQKDIEVLYQGIERLDKEKANREHLEMEIDEKADKSALASKVSRIQFDATTEQLNHMMQELVAKMSGQEQDWQKLLDKLLAEMDSKLDRLELDPLKQMLEDRWKSLRQQLKERPPLYQADEAAAMRRQLLAHFHCLSCDRPLETTVTGQVISVTPIISSMPGHRSVRPYTVFELEQIRQQSRNLKLGSSFPRVDMSQMERSVGRLHSMHSRMLMDMEKVQVHFGGSVKASSQMIRELLHTQCLSHPCYKRGADTADYSYSTVSRRCGGSHTLTYPYRRNRPQHLSPLEEIQIAMKHDEVDILGLDGHIYKGRMDTRLPGILGKDAPGVTKHNKAKLQQLQQLQQLQQLQQLQQLQQAQHARPHAHRQPSLGNMISPPSRPQSAQMIADSKAVPSGQKKDRPVSSEGRLLQSNVSHSSIPTDIASLQGSQQGLNMHIDVPPGEGLEEPTRGPRSTAAH</sequence>
<protein>
    <recommendedName>
        <fullName>Glutamine-rich protein 2</fullName>
    </recommendedName>
</protein>
<reference key="1">
    <citation type="journal article" date="2005" name="Science">
        <title>The transcriptional landscape of the mammalian genome.</title>
        <authorList>
            <person name="Carninci P."/>
            <person name="Kasukawa T."/>
            <person name="Katayama S."/>
            <person name="Gough J."/>
            <person name="Frith M.C."/>
            <person name="Maeda N."/>
            <person name="Oyama R."/>
            <person name="Ravasi T."/>
            <person name="Lenhard B."/>
            <person name="Wells C."/>
            <person name="Kodzius R."/>
            <person name="Shimokawa K."/>
            <person name="Bajic V.B."/>
            <person name="Brenner S.E."/>
            <person name="Batalov S."/>
            <person name="Forrest A.R."/>
            <person name="Zavolan M."/>
            <person name="Davis M.J."/>
            <person name="Wilming L.G."/>
            <person name="Aidinis V."/>
            <person name="Allen J.E."/>
            <person name="Ambesi-Impiombato A."/>
            <person name="Apweiler R."/>
            <person name="Aturaliya R.N."/>
            <person name="Bailey T.L."/>
            <person name="Bansal M."/>
            <person name="Baxter L."/>
            <person name="Beisel K.W."/>
            <person name="Bersano T."/>
            <person name="Bono H."/>
            <person name="Chalk A.M."/>
            <person name="Chiu K.P."/>
            <person name="Choudhary V."/>
            <person name="Christoffels A."/>
            <person name="Clutterbuck D.R."/>
            <person name="Crowe M.L."/>
            <person name="Dalla E."/>
            <person name="Dalrymple B.P."/>
            <person name="de Bono B."/>
            <person name="Della Gatta G."/>
            <person name="di Bernardo D."/>
            <person name="Down T."/>
            <person name="Engstrom P."/>
            <person name="Fagiolini M."/>
            <person name="Faulkner G."/>
            <person name="Fletcher C.F."/>
            <person name="Fukushima T."/>
            <person name="Furuno M."/>
            <person name="Futaki S."/>
            <person name="Gariboldi M."/>
            <person name="Georgii-Hemming P."/>
            <person name="Gingeras T.R."/>
            <person name="Gojobori T."/>
            <person name="Green R.E."/>
            <person name="Gustincich S."/>
            <person name="Harbers M."/>
            <person name="Hayashi Y."/>
            <person name="Hensch T.K."/>
            <person name="Hirokawa N."/>
            <person name="Hill D."/>
            <person name="Huminiecki L."/>
            <person name="Iacono M."/>
            <person name="Ikeo K."/>
            <person name="Iwama A."/>
            <person name="Ishikawa T."/>
            <person name="Jakt M."/>
            <person name="Kanapin A."/>
            <person name="Katoh M."/>
            <person name="Kawasawa Y."/>
            <person name="Kelso J."/>
            <person name="Kitamura H."/>
            <person name="Kitano H."/>
            <person name="Kollias G."/>
            <person name="Krishnan S.P."/>
            <person name="Kruger A."/>
            <person name="Kummerfeld S.K."/>
            <person name="Kurochkin I.V."/>
            <person name="Lareau L.F."/>
            <person name="Lazarevic D."/>
            <person name="Lipovich L."/>
            <person name="Liu J."/>
            <person name="Liuni S."/>
            <person name="McWilliam S."/>
            <person name="Madan Babu M."/>
            <person name="Madera M."/>
            <person name="Marchionni L."/>
            <person name="Matsuda H."/>
            <person name="Matsuzawa S."/>
            <person name="Miki H."/>
            <person name="Mignone F."/>
            <person name="Miyake S."/>
            <person name="Morris K."/>
            <person name="Mottagui-Tabar S."/>
            <person name="Mulder N."/>
            <person name="Nakano N."/>
            <person name="Nakauchi H."/>
            <person name="Ng P."/>
            <person name="Nilsson R."/>
            <person name="Nishiguchi S."/>
            <person name="Nishikawa S."/>
            <person name="Nori F."/>
            <person name="Ohara O."/>
            <person name="Okazaki Y."/>
            <person name="Orlando V."/>
            <person name="Pang K.C."/>
            <person name="Pavan W.J."/>
            <person name="Pavesi G."/>
            <person name="Pesole G."/>
            <person name="Petrovsky N."/>
            <person name="Piazza S."/>
            <person name="Reed J."/>
            <person name="Reid J.F."/>
            <person name="Ring B.Z."/>
            <person name="Ringwald M."/>
            <person name="Rost B."/>
            <person name="Ruan Y."/>
            <person name="Salzberg S.L."/>
            <person name="Sandelin A."/>
            <person name="Schneider C."/>
            <person name="Schoenbach C."/>
            <person name="Sekiguchi K."/>
            <person name="Semple C.A."/>
            <person name="Seno S."/>
            <person name="Sessa L."/>
            <person name="Sheng Y."/>
            <person name="Shibata Y."/>
            <person name="Shimada H."/>
            <person name="Shimada K."/>
            <person name="Silva D."/>
            <person name="Sinclair B."/>
            <person name="Sperling S."/>
            <person name="Stupka E."/>
            <person name="Sugiura K."/>
            <person name="Sultana R."/>
            <person name="Takenaka Y."/>
            <person name="Taki K."/>
            <person name="Tammoja K."/>
            <person name="Tan S.L."/>
            <person name="Tang S."/>
            <person name="Taylor M.S."/>
            <person name="Tegner J."/>
            <person name="Teichmann S.A."/>
            <person name="Ueda H.R."/>
            <person name="van Nimwegen E."/>
            <person name="Verardo R."/>
            <person name="Wei C.L."/>
            <person name="Yagi K."/>
            <person name="Yamanishi H."/>
            <person name="Zabarovsky E."/>
            <person name="Zhu S."/>
            <person name="Zimmer A."/>
            <person name="Hide W."/>
            <person name="Bult C."/>
            <person name="Grimmond S.M."/>
            <person name="Teasdale R.D."/>
            <person name="Liu E.T."/>
            <person name="Brusic V."/>
            <person name="Quackenbush J."/>
            <person name="Wahlestedt C."/>
            <person name="Mattick J.S."/>
            <person name="Hume D.A."/>
            <person name="Kai C."/>
            <person name="Sasaki D."/>
            <person name="Tomaru Y."/>
            <person name="Fukuda S."/>
            <person name="Kanamori-Katayama M."/>
            <person name="Suzuki M."/>
            <person name="Aoki J."/>
            <person name="Arakawa T."/>
            <person name="Iida J."/>
            <person name="Imamura K."/>
            <person name="Itoh M."/>
            <person name="Kato T."/>
            <person name="Kawaji H."/>
            <person name="Kawagashira N."/>
            <person name="Kawashima T."/>
            <person name="Kojima M."/>
            <person name="Kondo S."/>
            <person name="Konno H."/>
            <person name="Nakano K."/>
            <person name="Ninomiya N."/>
            <person name="Nishio T."/>
            <person name="Okada M."/>
            <person name="Plessy C."/>
            <person name="Shibata K."/>
            <person name="Shiraki T."/>
            <person name="Suzuki S."/>
            <person name="Tagami M."/>
            <person name="Waki K."/>
            <person name="Watahiki A."/>
            <person name="Okamura-Oho Y."/>
            <person name="Suzuki H."/>
            <person name="Kawai J."/>
            <person name="Hayashizaki Y."/>
        </authorList>
    </citation>
    <scope>NUCLEOTIDE SEQUENCE [LARGE SCALE MRNA]</scope>
    <source>
        <strain>C57BL/6J</strain>
    </source>
</reference>
<reference key="2">
    <citation type="journal article" date="2009" name="PLoS Biol.">
        <title>Lineage-specific biology revealed by a finished genome assembly of the mouse.</title>
        <authorList>
            <person name="Church D.M."/>
            <person name="Goodstadt L."/>
            <person name="Hillier L.W."/>
            <person name="Zody M.C."/>
            <person name="Goldstein S."/>
            <person name="She X."/>
            <person name="Bult C.J."/>
            <person name="Agarwala R."/>
            <person name="Cherry J.L."/>
            <person name="DiCuccio M."/>
            <person name="Hlavina W."/>
            <person name="Kapustin Y."/>
            <person name="Meric P."/>
            <person name="Maglott D."/>
            <person name="Birtle Z."/>
            <person name="Marques A.C."/>
            <person name="Graves T."/>
            <person name="Zhou S."/>
            <person name="Teague B."/>
            <person name="Potamousis K."/>
            <person name="Churas C."/>
            <person name="Place M."/>
            <person name="Herschleb J."/>
            <person name="Runnheim R."/>
            <person name="Forrest D."/>
            <person name="Amos-Landgraf J."/>
            <person name="Schwartz D.C."/>
            <person name="Cheng Z."/>
            <person name="Lindblad-Toh K."/>
            <person name="Eichler E.E."/>
            <person name="Ponting C.P."/>
        </authorList>
    </citation>
    <scope>NUCLEOTIDE SEQUENCE [LARGE SCALE GENOMIC DNA]</scope>
    <source>
        <strain>C57BL/6J</strain>
    </source>
</reference>
<reference key="3">
    <citation type="journal article" date="2004" name="Genome Res.">
        <title>The status, quality, and expansion of the NIH full-length cDNA project: the Mammalian Gene Collection (MGC).</title>
        <authorList>
            <consortium name="The MGC Project Team"/>
        </authorList>
    </citation>
    <scope>NUCLEOTIDE SEQUENCE [LARGE SCALE MRNA]</scope>
    <scope>VARIANT 471-LEU--GLN-479 DEL</scope>
    <source>
        <tissue>Brain</tissue>
    </source>
</reference>
<reference key="4">
    <citation type="journal article" date="2019" name="Nat. Commun.">
        <title>Loss-of-function mutations in QRICH2 cause male infertility with multiple morphological abnormalities of the sperm flagella.</title>
        <authorList>
            <person name="Shen Y."/>
            <person name="Zhang F."/>
            <person name="Li F."/>
            <person name="Jiang X."/>
            <person name="Yang Y."/>
            <person name="Li X."/>
            <person name="Li W."/>
            <person name="Wang X."/>
            <person name="Cheng J."/>
            <person name="Liu M."/>
            <person name="Zhang X."/>
            <person name="Yuan G."/>
            <person name="Pei X."/>
            <person name="Cai K."/>
            <person name="Hu F."/>
            <person name="Sun J."/>
            <person name="Yan L."/>
            <person name="Tang L."/>
            <person name="Jiang C."/>
            <person name="Tu W."/>
            <person name="Xu J."/>
            <person name="Wu H."/>
            <person name="Kong W."/>
            <person name="Li S."/>
            <person name="Wang K."/>
            <person name="Sheng K."/>
            <person name="Zhao X."/>
            <person name="Yue H."/>
            <person name="Yang X."/>
            <person name="Xu W."/>
        </authorList>
    </citation>
    <scope>FUNCTION</scope>
    <scope>DISRUPTION PHENOTYPE</scope>
    <scope>TISSUE SPECIFICITY</scope>
    <scope>DEVELOPMENTAL STAGE</scope>
    <scope>SUBCELLULAR LOCATION</scope>
</reference>
<dbReference type="EMBL" id="AK131945">
    <property type="protein sequence ID" value="BAE20891.1"/>
    <property type="molecule type" value="mRNA"/>
</dbReference>
<dbReference type="EMBL" id="AL645851">
    <property type="status" value="NOT_ANNOTATED_CDS"/>
    <property type="molecule type" value="Genomic_DNA"/>
</dbReference>
<dbReference type="EMBL" id="AL645861">
    <property type="status" value="NOT_ANNOTATED_CDS"/>
    <property type="molecule type" value="Genomic_DNA"/>
</dbReference>
<dbReference type="EMBL" id="BC150976">
    <property type="protein sequence ID" value="AAI50977.1"/>
    <property type="molecule type" value="mRNA"/>
</dbReference>
<dbReference type="RefSeq" id="NP_001028439.1">
    <property type="nucleotide sequence ID" value="NM_001033267.2"/>
</dbReference>
<dbReference type="SMR" id="Q3V2A7"/>
<dbReference type="FunCoup" id="Q3V2A7">
    <property type="interactions" value="6"/>
</dbReference>
<dbReference type="STRING" id="10090.ENSMUSP00000091437"/>
<dbReference type="PhosphoSitePlus" id="Q3V2A7"/>
<dbReference type="jPOST" id="Q3V2A7"/>
<dbReference type="PaxDb" id="10090-ENSMUSP00000091437"/>
<dbReference type="ProteomicsDB" id="343448"/>
<dbReference type="Antibodypedia" id="19682">
    <property type="antibodies" value="14 antibodies from 8 providers"/>
</dbReference>
<dbReference type="Ensembl" id="ENSMUST00000093909.12">
    <property type="protein sequence ID" value="ENSMUSP00000091437.4"/>
    <property type="gene ID" value="ENSMUSG00000070331.15"/>
</dbReference>
<dbReference type="GeneID" id="217341"/>
<dbReference type="KEGG" id="mmu:217341"/>
<dbReference type="UCSC" id="uc007mlc.1">
    <property type="organism name" value="mouse"/>
</dbReference>
<dbReference type="AGR" id="MGI:2684912"/>
<dbReference type="CTD" id="84074"/>
<dbReference type="MGI" id="MGI:2684912">
    <property type="gene designation" value="Qrich2"/>
</dbReference>
<dbReference type="VEuPathDB" id="HostDB:ENSMUSG00000070331"/>
<dbReference type="GeneTree" id="ENSGT00940000161294"/>
<dbReference type="HOGENOM" id="CLU_010161_1_0_1"/>
<dbReference type="InParanoid" id="Q3V2A7"/>
<dbReference type="BioGRID-ORCS" id="217341">
    <property type="hits" value="3 hits in 76 CRISPR screens"/>
</dbReference>
<dbReference type="PRO" id="PR:Q3V2A7"/>
<dbReference type="Proteomes" id="UP000000589">
    <property type="component" value="Chromosome 11"/>
</dbReference>
<dbReference type="Bgee" id="ENSMUSG00000070331">
    <property type="expression patterns" value="Expressed in spermatid and 19 other cell types or tissues"/>
</dbReference>
<dbReference type="ExpressionAtlas" id="Q3V2A7">
    <property type="expression patterns" value="baseline and differential"/>
</dbReference>
<dbReference type="GO" id="GO:0005737">
    <property type="term" value="C:cytoplasm"/>
    <property type="evidence" value="ECO:0000314"/>
    <property type="project" value="UniProtKB"/>
</dbReference>
<dbReference type="GO" id="GO:0031965">
    <property type="term" value="C:nuclear membrane"/>
    <property type="evidence" value="ECO:0007669"/>
    <property type="project" value="UniProtKB-SubCell"/>
</dbReference>
<dbReference type="GO" id="GO:0005634">
    <property type="term" value="C:nucleus"/>
    <property type="evidence" value="ECO:0000314"/>
    <property type="project" value="UniProtKB"/>
</dbReference>
<dbReference type="GO" id="GO:0036126">
    <property type="term" value="C:sperm flagellum"/>
    <property type="evidence" value="ECO:0000314"/>
    <property type="project" value="UniProtKB"/>
</dbReference>
<dbReference type="GO" id="GO:0030031">
    <property type="term" value="P:cell projection assembly"/>
    <property type="evidence" value="ECO:0000315"/>
    <property type="project" value="UniProtKB"/>
</dbReference>
<dbReference type="GO" id="GO:0030317">
    <property type="term" value="P:flagellated sperm motility"/>
    <property type="evidence" value="ECO:0000315"/>
    <property type="project" value="UniProtKB"/>
</dbReference>
<dbReference type="GO" id="GO:2000059">
    <property type="term" value="P:negative regulation of ubiquitin-dependent protein catabolic process"/>
    <property type="evidence" value="ECO:0000315"/>
    <property type="project" value="UniProtKB"/>
</dbReference>
<dbReference type="InterPro" id="IPR032013">
    <property type="entry name" value="DUF4795"/>
</dbReference>
<dbReference type="PANTHER" id="PTHR46766">
    <property type="entry name" value="GLUTAMINE-RICH PROTEIN 2"/>
    <property type="match status" value="1"/>
</dbReference>
<dbReference type="PANTHER" id="PTHR46766:SF1">
    <property type="entry name" value="GLUTAMINE-RICH PROTEIN 2"/>
    <property type="match status" value="1"/>
</dbReference>
<dbReference type="Pfam" id="PF16043">
    <property type="entry name" value="DUF4795"/>
    <property type="match status" value="1"/>
</dbReference>
<proteinExistence type="evidence at transcript level"/>
<comment type="function">
    <text evidence="4">Has an essential role in the formation of sperm flagella and flagellar structure maintainance. It acts as a suppressor of ubiquitination and degradation of proteins involved in flagellar development and motility.</text>
</comment>
<comment type="subunit">
    <text evidence="1">Interacts with AKAP3, ODF2 and TSSK4. Interacts with AKAP4.</text>
</comment>
<comment type="subcellular location">
    <subcellularLocation>
        <location evidence="4">Nucleus membrane</location>
    </subcellularLocation>
    <subcellularLocation>
        <location evidence="4">Nucleus</location>
    </subcellularLocation>
    <subcellularLocation>
        <location evidence="4">Cytoplasm</location>
    </subcellularLocation>
    <subcellularLocation>
        <location evidence="4">Cell projection</location>
        <location evidence="4">Cilium</location>
        <location evidence="4">Flagellum</location>
    </subcellularLocation>
    <text evidence="4">Localization varies during spermatozoa development. The protein is distributed in the nuclear membrane of the spermatogonia, in the nucleus of round spermatids, in the nucleus and cytoplasm of early elongating spermatids, in the cytoplasm of late elongating spermatids, and in the flagella of epididymal spermatozoa.</text>
</comment>
<comment type="tissue specificity">
    <text evidence="4">Expressed in testis (PubMed:30683861). Not detected in heart, brain, kidney, stomach, ovary, liver, lung and uterus.</text>
</comment>
<comment type="developmental stage">
    <text evidence="4">Significant expression begins at postnatal day 15 and reaches a peak at postnatal day 22. Stable and high expression is detected after postnatal day 22.</text>
</comment>
<comment type="disruption phenotype">
    <text evidence="4">Knockout mice show coiled, bent, irregular, short or absent flagella, defects of sperm flagellar ultrastructure, a significant reduction in sperm locomotion, and decreased sperm count.</text>
</comment>
<name>QRIC2_MOUSE</name>
<accession>Q3V2A7</accession>
<accession>B9EKM0</accession>
<evidence type="ECO:0000250" key="1">
    <source>
        <dbReference type="UniProtKB" id="Q9H0J4"/>
    </source>
</evidence>
<evidence type="ECO:0000256" key="2">
    <source>
        <dbReference type="SAM" id="MobiDB-lite"/>
    </source>
</evidence>
<evidence type="ECO:0000269" key="3">
    <source>
    </source>
</evidence>
<evidence type="ECO:0000269" key="4">
    <source>
    </source>
</evidence>
<evidence type="ECO:0000312" key="5">
    <source>
        <dbReference type="MGI" id="MGI:2684912"/>
    </source>
</evidence>
<gene>
    <name evidence="5" type="primary">Qrich2</name>
    <name evidence="5" type="synonym">Gm66</name>
</gene>
<organism>
    <name type="scientific">Mus musculus</name>
    <name type="common">Mouse</name>
    <dbReference type="NCBI Taxonomy" id="10090"/>
    <lineage>
        <taxon>Eukaryota</taxon>
        <taxon>Metazoa</taxon>
        <taxon>Chordata</taxon>
        <taxon>Craniata</taxon>
        <taxon>Vertebrata</taxon>
        <taxon>Euteleostomi</taxon>
        <taxon>Mammalia</taxon>
        <taxon>Eutheria</taxon>
        <taxon>Euarchontoglires</taxon>
        <taxon>Glires</taxon>
        <taxon>Rodentia</taxon>
        <taxon>Myomorpha</taxon>
        <taxon>Muroidea</taxon>
        <taxon>Muridae</taxon>
        <taxon>Murinae</taxon>
        <taxon>Mus</taxon>
        <taxon>Mus</taxon>
    </lineage>
</organism>